<organism>
    <name type="scientific">Pseudomonas syringae pv. syringae (strain B728a)</name>
    <dbReference type="NCBI Taxonomy" id="205918"/>
    <lineage>
        <taxon>Bacteria</taxon>
        <taxon>Pseudomonadati</taxon>
        <taxon>Pseudomonadota</taxon>
        <taxon>Gammaproteobacteria</taxon>
        <taxon>Pseudomonadales</taxon>
        <taxon>Pseudomonadaceae</taxon>
        <taxon>Pseudomonas</taxon>
        <taxon>Pseudomonas syringae</taxon>
    </lineage>
</organism>
<comment type="function">
    <text evidence="1">Catalyzes the dephosphorylation of undecaprenyl diphosphate (UPP). Confers resistance to bacitracin.</text>
</comment>
<comment type="catalytic activity">
    <reaction evidence="1">
        <text>di-trans,octa-cis-undecaprenyl diphosphate + H2O = di-trans,octa-cis-undecaprenyl phosphate + phosphate + H(+)</text>
        <dbReference type="Rhea" id="RHEA:28094"/>
        <dbReference type="ChEBI" id="CHEBI:15377"/>
        <dbReference type="ChEBI" id="CHEBI:15378"/>
        <dbReference type="ChEBI" id="CHEBI:43474"/>
        <dbReference type="ChEBI" id="CHEBI:58405"/>
        <dbReference type="ChEBI" id="CHEBI:60392"/>
        <dbReference type="EC" id="3.6.1.27"/>
    </reaction>
</comment>
<comment type="subcellular location">
    <subcellularLocation>
        <location evidence="1">Cell inner membrane</location>
        <topology evidence="1">Multi-pass membrane protein</topology>
    </subcellularLocation>
</comment>
<comment type="miscellaneous">
    <text>Bacitracin is thought to be involved in the inhibition of peptidoglycan synthesis by sequestering undecaprenyl diphosphate, thereby reducing the pool of lipid carrier available.</text>
</comment>
<comment type="similarity">
    <text evidence="1">Belongs to the UppP family.</text>
</comment>
<dbReference type="EC" id="3.6.1.27" evidence="1"/>
<dbReference type="EMBL" id="CP000075">
    <property type="protein sequence ID" value="AAY38042.1"/>
    <property type="molecule type" value="Genomic_DNA"/>
</dbReference>
<dbReference type="RefSeq" id="WP_003400617.1">
    <property type="nucleotide sequence ID" value="NC_007005.1"/>
</dbReference>
<dbReference type="RefSeq" id="YP_236080.1">
    <property type="nucleotide sequence ID" value="NC_007005.1"/>
</dbReference>
<dbReference type="SMR" id="Q4ZS30"/>
<dbReference type="STRING" id="205918.Psyr_3008"/>
<dbReference type="KEGG" id="psb:Psyr_3008"/>
<dbReference type="PATRIC" id="fig|205918.7.peg.3069"/>
<dbReference type="eggNOG" id="COG1968">
    <property type="taxonomic scope" value="Bacteria"/>
</dbReference>
<dbReference type="HOGENOM" id="CLU_060296_2_0_6"/>
<dbReference type="OrthoDB" id="9808289at2"/>
<dbReference type="Proteomes" id="UP000000426">
    <property type="component" value="Chromosome"/>
</dbReference>
<dbReference type="GO" id="GO:0005886">
    <property type="term" value="C:plasma membrane"/>
    <property type="evidence" value="ECO:0007669"/>
    <property type="project" value="UniProtKB-SubCell"/>
</dbReference>
<dbReference type="GO" id="GO:0050380">
    <property type="term" value="F:undecaprenyl-diphosphatase activity"/>
    <property type="evidence" value="ECO:0007669"/>
    <property type="project" value="UniProtKB-UniRule"/>
</dbReference>
<dbReference type="GO" id="GO:0071555">
    <property type="term" value="P:cell wall organization"/>
    <property type="evidence" value="ECO:0007669"/>
    <property type="project" value="UniProtKB-KW"/>
</dbReference>
<dbReference type="GO" id="GO:0009252">
    <property type="term" value="P:peptidoglycan biosynthetic process"/>
    <property type="evidence" value="ECO:0007669"/>
    <property type="project" value="UniProtKB-KW"/>
</dbReference>
<dbReference type="GO" id="GO:0008360">
    <property type="term" value="P:regulation of cell shape"/>
    <property type="evidence" value="ECO:0007669"/>
    <property type="project" value="UniProtKB-KW"/>
</dbReference>
<dbReference type="GO" id="GO:0046677">
    <property type="term" value="P:response to antibiotic"/>
    <property type="evidence" value="ECO:0007669"/>
    <property type="project" value="UniProtKB-UniRule"/>
</dbReference>
<dbReference type="HAMAP" id="MF_01006">
    <property type="entry name" value="Undec_diphosphatase"/>
    <property type="match status" value="1"/>
</dbReference>
<dbReference type="InterPro" id="IPR003824">
    <property type="entry name" value="UppP"/>
</dbReference>
<dbReference type="NCBIfam" id="NF001389">
    <property type="entry name" value="PRK00281.1-2"/>
    <property type="match status" value="1"/>
</dbReference>
<dbReference type="NCBIfam" id="NF001390">
    <property type="entry name" value="PRK00281.1-4"/>
    <property type="match status" value="1"/>
</dbReference>
<dbReference type="NCBIfam" id="TIGR00753">
    <property type="entry name" value="undec_PP_bacA"/>
    <property type="match status" value="1"/>
</dbReference>
<dbReference type="PANTHER" id="PTHR30622">
    <property type="entry name" value="UNDECAPRENYL-DIPHOSPHATASE"/>
    <property type="match status" value="1"/>
</dbReference>
<dbReference type="PANTHER" id="PTHR30622:SF3">
    <property type="entry name" value="UNDECAPRENYL-DIPHOSPHATASE"/>
    <property type="match status" value="1"/>
</dbReference>
<dbReference type="Pfam" id="PF02673">
    <property type="entry name" value="BacA"/>
    <property type="match status" value="1"/>
</dbReference>
<sequence length="276" mass="30456">MDLWTAAQALILGVVEGLTEFLPISSTGHQIIVADLIDFGGERAMAFNIIIQLGAILAVVWEFRRKILDVVVGLPKQQQAQRFTLNLLIAFMPAVVLGVIFADTIHHYLFNAITVATALVIGGVIMLWAERREHTVRTETVDDMSWSDALKIGLVQCLAMIPGTSRSGSTIIGGLLFGLSRKAATEFSFFLAMPTMVGAAVYSGYKYRDMFRPDDFAVFAIGFVTSFIFAMIAVRGLLKFIATHSYAVFAWYRIAFGLLILATWQFGWIDWASAKA</sequence>
<reference key="1">
    <citation type="journal article" date="2005" name="Proc. Natl. Acad. Sci. U.S.A.">
        <title>Comparison of the complete genome sequences of Pseudomonas syringae pv. syringae B728a and pv. tomato DC3000.</title>
        <authorList>
            <person name="Feil H."/>
            <person name="Feil W.S."/>
            <person name="Chain P."/>
            <person name="Larimer F."/>
            <person name="Dibartolo G."/>
            <person name="Copeland A."/>
            <person name="Lykidis A."/>
            <person name="Trong S."/>
            <person name="Nolan M."/>
            <person name="Goltsman E."/>
            <person name="Thiel J."/>
            <person name="Malfatti S."/>
            <person name="Loper J.E."/>
            <person name="Lapidus A."/>
            <person name="Detter J.C."/>
            <person name="Land M."/>
            <person name="Richardson P.M."/>
            <person name="Kyrpides N.C."/>
            <person name="Ivanova N."/>
            <person name="Lindow S.E."/>
        </authorList>
    </citation>
    <scope>NUCLEOTIDE SEQUENCE [LARGE SCALE GENOMIC DNA]</scope>
    <source>
        <strain>B728a</strain>
    </source>
</reference>
<evidence type="ECO:0000255" key="1">
    <source>
        <dbReference type="HAMAP-Rule" id="MF_01006"/>
    </source>
</evidence>
<protein>
    <recommendedName>
        <fullName evidence="1">Undecaprenyl-diphosphatase</fullName>
        <ecNumber evidence="1">3.6.1.27</ecNumber>
    </recommendedName>
    <alternativeName>
        <fullName evidence="1">Bacitracin resistance protein</fullName>
    </alternativeName>
    <alternativeName>
        <fullName evidence="1">Undecaprenyl pyrophosphate phosphatase</fullName>
    </alternativeName>
</protein>
<proteinExistence type="inferred from homology"/>
<feature type="chain" id="PRO_0000227633" description="Undecaprenyl-diphosphatase">
    <location>
        <begin position="1"/>
        <end position="276"/>
    </location>
</feature>
<feature type="transmembrane region" description="Helical" evidence="1">
    <location>
        <begin position="43"/>
        <end position="63"/>
    </location>
</feature>
<feature type="transmembrane region" description="Helical" evidence="1">
    <location>
        <begin position="85"/>
        <end position="105"/>
    </location>
</feature>
<feature type="transmembrane region" description="Helical" evidence="1">
    <location>
        <begin position="109"/>
        <end position="129"/>
    </location>
</feature>
<feature type="transmembrane region" description="Helical" evidence="1">
    <location>
        <begin position="183"/>
        <end position="203"/>
    </location>
</feature>
<feature type="transmembrane region" description="Helical" evidence="1">
    <location>
        <begin position="218"/>
        <end position="238"/>
    </location>
</feature>
<feature type="transmembrane region" description="Helical" evidence="1">
    <location>
        <begin position="254"/>
        <end position="274"/>
    </location>
</feature>
<gene>
    <name evidence="1" type="primary">uppP</name>
    <name type="ordered locus">Psyr_3008</name>
</gene>
<keyword id="KW-0046">Antibiotic resistance</keyword>
<keyword id="KW-0997">Cell inner membrane</keyword>
<keyword id="KW-1003">Cell membrane</keyword>
<keyword id="KW-0133">Cell shape</keyword>
<keyword id="KW-0961">Cell wall biogenesis/degradation</keyword>
<keyword id="KW-0378">Hydrolase</keyword>
<keyword id="KW-0472">Membrane</keyword>
<keyword id="KW-0573">Peptidoglycan synthesis</keyword>
<keyword id="KW-0812">Transmembrane</keyword>
<keyword id="KW-1133">Transmembrane helix</keyword>
<name>UPPP_PSEU2</name>
<accession>Q4ZS30</accession>